<sequence>MCPGNWLWASMTFMARFSRSSSRSPVRTRGSLEEMPSVHHPFLNVFELERLLYTGKTACNHADEVWPGLYLGDQDMANNRRELRRLGITHVLNASHSRWRGTPEAYEGLGIRYLGVEAHDSPAFDMSVHFQTAADFIHRALSQPGGKILVHCAVGVSRSATLVLAYLMLYHHFTLVEAIKKVKDHRGIIPNRGFLRQLLALDRRLRQGLEA</sequence>
<reference key="1">
    <citation type="journal article" date="2004" name="Genome Res.">
        <title>The status, quality, and expansion of the NIH full-length cDNA project: the Mammalian Gene Collection (MGC).</title>
        <authorList>
            <consortium name="The MGC Project Team"/>
        </authorList>
    </citation>
    <scope>NUCLEOTIDE SEQUENCE [LARGE SCALE MRNA]</scope>
    <source>
        <tissue>Brain</tissue>
    </source>
</reference>
<name>DUS26_RAT</name>
<dbReference type="EC" id="3.1.3.16"/>
<dbReference type="EC" id="3.1.3.48"/>
<dbReference type="EMBL" id="BC089954">
    <property type="protein sequence ID" value="AAH89954.1"/>
    <property type="molecule type" value="mRNA"/>
</dbReference>
<dbReference type="RefSeq" id="NP_001012352.1">
    <property type="nucleotide sequence ID" value="NM_001012352.1"/>
</dbReference>
<dbReference type="RefSeq" id="XP_006253294.1">
    <property type="nucleotide sequence ID" value="XM_006253232.5"/>
</dbReference>
<dbReference type="RefSeq" id="XP_017455623.1">
    <property type="nucleotide sequence ID" value="XM_017600134.1"/>
</dbReference>
<dbReference type="SMR" id="Q5FVI9"/>
<dbReference type="FunCoup" id="Q5FVI9">
    <property type="interactions" value="709"/>
</dbReference>
<dbReference type="STRING" id="10116.ENSRNOP00000015725"/>
<dbReference type="PhosphoSitePlus" id="Q5FVI9"/>
<dbReference type="PaxDb" id="10116-ENSRNOP00000015725"/>
<dbReference type="Ensembl" id="ENSRNOT00000015725.8">
    <property type="protein sequence ID" value="ENSRNOP00000015725.4"/>
    <property type="gene ID" value="ENSRNOG00000011518.8"/>
</dbReference>
<dbReference type="GeneID" id="306527"/>
<dbReference type="KEGG" id="rno:306527"/>
<dbReference type="UCSC" id="RGD:1310090">
    <property type="organism name" value="rat"/>
</dbReference>
<dbReference type="AGR" id="RGD:1310090"/>
<dbReference type="CTD" id="78986"/>
<dbReference type="RGD" id="1310090">
    <property type="gene designation" value="Dusp26"/>
</dbReference>
<dbReference type="eggNOG" id="KOG1716">
    <property type="taxonomic scope" value="Eukaryota"/>
</dbReference>
<dbReference type="GeneTree" id="ENSGT00940000158107"/>
<dbReference type="HOGENOM" id="CLU_027074_11_3_1"/>
<dbReference type="InParanoid" id="Q5FVI9"/>
<dbReference type="OMA" id="MSIHFQA"/>
<dbReference type="OrthoDB" id="2017893at2759"/>
<dbReference type="PhylomeDB" id="Q5FVI9"/>
<dbReference type="TreeFam" id="TF105128"/>
<dbReference type="PRO" id="PR:Q5FVI9"/>
<dbReference type="Proteomes" id="UP000002494">
    <property type="component" value="Chromosome 16"/>
</dbReference>
<dbReference type="Bgee" id="ENSRNOG00000011518">
    <property type="expression patterns" value="Expressed in skeletal muscle tissue and 15 other cell types or tissues"/>
</dbReference>
<dbReference type="GO" id="GO:0005737">
    <property type="term" value="C:cytoplasm"/>
    <property type="evidence" value="ECO:0000266"/>
    <property type="project" value="RGD"/>
</dbReference>
<dbReference type="GO" id="GO:0005794">
    <property type="term" value="C:Golgi apparatus"/>
    <property type="evidence" value="ECO:0000266"/>
    <property type="project" value="RGD"/>
</dbReference>
<dbReference type="GO" id="GO:0005654">
    <property type="term" value="C:nucleoplasm"/>
    <property type="evidence" value="ECO:0007669"/>
    <property type="project" value="Ensembl"/>
</dbReference>
<dbReference type="GO" id="GO:0005634">
    <property type="term" value="C:nucleus"/>
    <property type="evidence" value="ECO:0000266"/>
    <property type="project" value="RGD"/>
</dbReference>
<dbReference type="GO" id="GO:0033549">
    <property type="term" value="F:MAP kinase phosphatase activity"/>
    <property type="evidence" value="ECO:0000318"/>
    <property type="project" value="GO_Central"/>
</dbReference>
<dbReference type="GO" id="GO:0002039">
    <property type="term" value="F:p53 binding"/>
    <property type="evidence" value="ECO:0000266"/>
    <property type="project" value="RGD"/>
</dbReference>
<dbReference type="GO" id="GO:0004721">
    <property type="term" value="F:phosphoprotein phosphatase activity"/>
    <property type="evidence" value="ECO:0000266"/>
    <property type="project" value="RGD"/>
</dbReference>
<dbReference type="GO" id="GO:0004722">
    <property type="term" value="F:protein serine/threonine phosphatase activity"/>
    <property type="evidence" value="ECO:0007669"/>
    <property type="project" value="UniProtKB-EC"/>
</dbReference>
<dbReference type="GO" id="GO:0004725">
    <property type="term" value="F:protein tyrosine phosphatase activity"/>
    <property type="evidence" value="ECO:0007669"/>
    <property type="project" value="UniProtKB-EC"/>
</dbReference>
<dbReference type="GO" id="GO:0008138">
    <property type="term" value="F:protein tyrosine/serine/threonine phosphatase activity"/>
    <property type="evidence" value="ECO:0000266"/>
    <property type="project" value="RGD"/>
</dbReference>
<dbReference type="GO" id="GO:0061629">
    <property type="term" value="F:RNA polymerase II-specific DNA-binding transcription factor binding"/>
    <property type="evidence" value="ECO:0000266"/>
    <property type="project" value="RGD"/>
</dbReference>
<dbReference type="GO" id="GO:0070373">
    <property type="term" value="P:negative regulation of ERK1 and ERK2 cascade"/>
    <property type="evidence" value="ECO:0000266"/>
    <property type="project" value="RGD"/>
</dbReference>
<dbReference type="GO" id="GO:0043409">
    <property type="term" value="P:negative regulation of MAPK cascade"/>
    <property type="evidence" value="ECO:0000318"/>
    <property type="project" value="GO_Central"/>
</dbReference>
<dbReference type="GO" id="GO:0000122">
    <property type="term" value="P:negative regulation of transcription by RNA polymerase II"/>
    <property type="evidence" value="ECO:0000266"/>
    <property type="project" value="RGD"/>
</dbReference>
<dbReference type="GO" id="GO:0045785">
    <property type="term" value="P:positive regulation of cell adhesion"/>
    <property type="evidence" value="ECO:0000266"/>
    <property type="project" value="RGD"/>
</dbReference>
<dbReference type="CDD" id="cd14578">
    <property type="entry name" value="DUSP26"/>
    <property type="match status" value="1"/>
</dbReference>
<dbReference type="FunFam" id="3.90.190.10:FF:000037">
    <property type="entry name" value="dual specificity protein phosphatase 26"/>
    <property type="match status" value="1"/>
</dbReference>
<dbReference type="Gene3D" id="3.90.190.10">
    <property type="entry name" value="Protein tyrosine phosphatase superfamily"/>
    <property type="match status" value="1"/>
</dbReference>
<dbReference type="InterPro" id="IPR020405">
    <property type="entry name" value="Atypical_DUSP_subfamA"/>
</dbReference>
<dbReference type="InterPro" id="IPR000340">
    <property type="entry name" value="Dual-sp_phosphatase_cat-dom"/>
</dbReference>
<dbReference type="InterPro" id="IPR029021">
    <property type="entry name" value="Prot-tyrosine_phosphatase-like"/>
</dbReference>
<dbReference type="InterPro" id="IPR016130">
    <property type="entry name" value="Tyr_Pase_AS"/>
</dbReference>
<dbReference type="InterPro" id="IPR000387">
    <property type="entry name" value="Tyr_Pase_dom"/>
</dbReference>
<dbReference type="InterPro" id="IPR020422">
    <property type="entry name" value="TYR_PHOSPHATASE_DUAL_dom"/>
</dbReference>
<dbReference type="PANTHER" id="PTHR45682">
    <property type="entry name" value="AGAP008228-PA"/>
    <property type="match status" value="1"/>
</dbReference>
<dbReference type="PANTHER" id="PTHR45682:SF8">
    <property type="entry name" value="DUAL SPECIFICITY PROTEIN PHOSPHATASE 26"/>
    <property type="match status" value="1"/>
</dbReference>
<dbReference type="Pfam" id="PF00782">
    <property type="entry name" value="DSPc"/>
    <property type="match status" value="1"/>
</dbReference>
<dbReference type="PRINTS" id="PR01908">
    <property type="entry name" value="ADSPHPHTASE"/>
</dbReference>
<dbReference type="PRINTS" id="PR01909">
    <property type="entry name" value="ADSPHPHTASEA"/>
</dbReference>
<dbReference type="SMART" id="SM00195">
    <property type="entry name" value="DSPc"/>
    <property type="match status" value="1"/>
</dbReference>
<dbReference type="SUPFAM" id="SSF52799">
    <property type="entry name" value="(Phosphotyrosine protein) phosphatases II"/>
    <property type="match status" value="1"/>
</dbReference>
<dbReference type="PROSITE" id="PS00383">
    <property type="entry name" value="TYR_PHOSPHATASE_1"/>
    <property type="match status" value="1"/>
</dbReference>
<dbReference type="PROSITE" id="PS50056">
    <property type="entry name" value="TYR_PHOSPHATASE_2"/>
    <property type="match status" value="1"/>
</dbReference>
<dbReference type="PROSITE" id="PS50054">
    <property type="entry name" value="TYR_PHOSPHATASE_DUAL"/>
    <property type="match status" value="1"/>
</dbReference>
<organism>
    <name type="scientific">Rattus norvegicus</name>
    <name type="common">Rat</name>
    <dbReference type="NCBI Taxonomy" id="10116"/>
    <lineage>
        <taxon>Eukaryota</taxon>
        <taxon>Metazoa</taxon>
        <taxon>Chordata</taxon>
        <taxon>Craniata</taxon>
        <taxon>Vertebrata</taxon>
        <taxon>Euteleostomi</taxon>
        <taxon>Mammalia</taxon>
        <taxon>Eutheria</taxon>
        <taxon>Euarchontoglires</taxon>
        <taxon>Glires</taxon>
        <taxon>Rodentia</taxon>
        <taxon>Myomorpha</taxon>
        <taxon>Muroidea</taxon>
        <taxon>Muridae</taxon>
        <taxon>Murinae</taxon>
        <taxon>Rattus</taxon>
    </lineage>
</organism>
<keyword id="KW-0963">Cytoplasm</keyword>
<keyword id="KW-0333">Golgi apparatus</keyword>
<keyword id="KW-0378">Hydrolase</keyword>
<keyword id="KW-0539">Nucleus</keyword>
<keyword id="KW-0904">Protein phosphatase</keyword>
<keyword id="KW-1185">Reference proteome</keyword>
<comment type="function">
    <text evidence="1">Inactivates MAPK1 and MAPK3 which leads to dephosphorylation of heat shock factor protein 4 and a reduction in its DNA-binding activity.</text>
</comment>
<comment type="catalytic activity">
    <reaction evidence="3">
        <text>O-phospho-L-tyrosyl-[protein] + H2O = L-tyrosyl-[protein] + phosphate</text>
        <dbReference type="Rhea" id="RHEA:10684"/>
        <dbReference type="Rhea" id="RHEA-COMP:10136"/>
        <dbReference type="Rhea" id="RHEA-COMP:20101"/>
        <dbReference type="ChEBI" id="CHEBI:15377"/>
        <dbReference type="ChEBI" id="CHEBI:43474"/>
        <dbReference type="ChEBI" id="CHEBI:46858"/>
        <dbReference type="ChEBI" id="CHEBI:61978"/>
        <dbReference type="EC" id="3.1.3.48"/>
    </reaction>
</comment>
<comment type="catalytic activity">
    <reaction>
        <text>O-phospho-L-seryl-[protein] + H2O = L-seryl-[protein] + phosphate</text>
        <dbReference type="Rhea" id="RHEA:20629"/>
        <dbReference type="Rhea" id="RHEA-COMP:9863"/>
        <dbReference type="Rhea" id="RHEA-COMP:11604"/>
        <dbReference type="ChEBI" id="CHEBI:15377"/>
        <dbReference type="ChEBI" id="CHEBI:29999"/>
        <dbReference type="ChEBI" id="CHEBI:43474"/>
        <dbReference type="ChEBI" id="CHEBI:83421"/>
        <dbReference type="EC" id="3.1.3.16"/>
    </reaction>
</comment>
<comment type="catalytic activity">
    <reaction>
        <text>O-phospho-L-threonyl-[protein] + H2O = L-threonyl-[protein] + phosphate</text>
        <dbReference type="Rhea" id="RHEA:47004"/>
        <dbReference type="Rhea" id="RHEA-COMP:11060"/>
        <dbReference type="Rhea" id="RHEA-COMP:11605"/>
        <dbReference type="ChEBI" id="CHEBI:15377"/>
        <dbReference type="ChEBI" id="CHEBI:30013"/>
        <dbReference type="ChEBI" id="CHEBI:43474"/>
        <dbReference type="ChEBI" id="CHEBI:61977"/>
        <dbReference type="EC" id="3.1.3.16"/>
    </reaction>
</comment>
<comment type="subunit">
    <text evidence="1">Interacts with HSF4.</text>
</comment>
<comment type="subcellular location">
    <subcellularLocation>
        <location evidence="1">Cytoplasm</location>
    </subcellularLocation>
    <subcellularLocation>
        <location evidence="1">Nucleus</location>
    </subcellularLocation>
    <subcellularLocation>
        <location evidence="1">Golgi apparatus</location>
    </subcellularLocation>
</comment>
<comment type="similarity">
    <text evidence="4">Belongs to the protein-tyrosine phosphatase family. Non-receptor class dual specificity subfamily.</text>
</comment>
<protein>
    <recommendedName>
        <fullName>Dual specificity protein phosphatase 26</fullName>
        <ecNumber>3.1.3.16</ecNumber>
        <ecNumber>3.1.3.48</ecNumber>
    </recommendedName>
</protein>
<gene>
    <name type="primary">Dusp26</name>
</gene>
<evidence type="ECO:0000250" key="1"/>
<evidence type="ECO:0000255" key="2">
    <source>
        <dbReference type="PROSITE-ProRule" id="PRU00160"/>
    </source>
</evidence>
<evidence type="ECO:0000255" key="3">
    <source>
        <dbReference type="PROSITE-ProRule" id="PRU10044"/>
    </source>
</evidence>
<evidence type="ECO:0000305" key="4"/>
<proteinExistence type="evidence at transcript level"/>
<accession>Q5FVI9</accession>
<feature type="chain" id="PRO_0000292222" description="Dual specificity protein phosphatase 26">
    <location>
        <begin position="1"/>
        <end position="211"/>
    </location>
</feature>
<feature type="domain" description="Tyrosine-protein phosphatase" evidence="2">
    <location>
        <begin position="60"/>
        <end position="207"/>
    </location>
</feature>
<feature type="active site" description="Phosphocysteine intermediate" evidence="2">
    <location>
        <position position="152"/>
    </location>
</feature>